<sequence length="265" mass="26463">MSTLRLRGDLPERVDLLNITPLALSGLSEAEAGKLAIGTSRRGLTLGDVFEISLDGSDSLVIEGGSARLDRVGAALSQGSIRVEGDVGQRLGEGMAAGSLTVTGSAGPYAGTGATGGTITIEGDAGDHAGGAVYAAKAGLDGATLVIKGAAGDHLGDRMRRGMILAGSAGAFAASRMIAGTIVVSGALGDHPGYGMRRGTLIAGSHGTLLPTFVETGTPDLVFVRLLAQSLKHLGAAQASLLSGTLRRYSGDLATLGKGELFVPA</sequence>
<keyword id="KW-0963">Cytoplasm</keyword>
<keyword id="KW-0903">Direct protein sequencing</keyword>
<keyword id="KW-0554">One-carbon metabolism</keyword>
<keyword id="KW-1185">Reference proteome</keyword>
<accession>C5B135</accession>
<reference key="1">
    <citation type="journal article" date="2009" name="PLoS ONE">
        <title>Methylobacterium genome sequences: a reference blueprint to investigate microbial metabolism of C1 compounds from natural and industrial sources.</title>
        <authorList>
            <person name="Vuilleumier S."/>
            <person name="Chistoserdova L."/>
            <person name="Lee M.-C."/>
            <person name="Bringel F."/>
            <person name="Lajus A."/>
            <person name="Zhou Y."/>
            <person name="Gourion B."/>
            <person name="Barbe V."/>
            <person name="Chang J."/>
            <person name="Cruveiller S."/>
            <person name="Dossat C."/>
            <person name="Gillett W."/>
            <person name="Gruffaz C."/>
            <person name="Haugen E."/>
            <person name="Hourcade E."/>
            <person name="Levy R."/>
            <person name="Mangenot S."/>
            <person name="Muller E."/>
            <person name="Nadalig T."/>
            <person name="Pagni M."/>
            <person name="Penny C."/>
            <person name="Peyraud R."/>
            <person name="Robinson D.G."/>
            <person name="Roche D."/>
            <person name="Rouy Z."/>
            <person name="Saenampechek C."/>
            <person name="Salvignol G."/>
            <person name="Vallenet D."/>
            <person name="Wu Z."/>
            <person name="Marx C.J."/>
            <person name="Vorholt J.A."/>
            <person name="Olson M.V."/>
            <person name="Kaul R."/>
            <person name="Weissenbach J."/>
            <person name="Medigue C."/>
            <person name="Lidstrom M.E."/>
        </authorList>
    </citation>
    <scope>NUCLEOTIDE SEQUENCE [LARGE SCALE GENOMIC DNA]</scope>
    <source>
        <strain>ATCC 14718 / DSM 1338 / JCM 2805 / NCIMB 9133 / AM1</strain>
    </source>
</reference>
<reference key="2">
    <citation type="journal article" date="2001" name="Eur. J. Biochem.">
        <title>Characterization of the formyltransferase from Methylobacterium extorquens AM1.</title>
        <authorList>
            <person name="Pomper B.K."/>
            <person name="Vorholt J.A."/>
        </authorList>
    </citation>
    <scope>PROTEIN SEQUENCE OF 2-16</scope>
    <scope>FUNCTION IN FORMALDEHYDE DEGRADATION</scope>
    <scope>SUBUNIT</scope>
</reference>
<reference key="3">
    <citation type="journal article" date="2002" name="FEBS Lett.">
        <title>Generation of formate by the formyltransferase/hydrolase complex (Fhc) from Methylobacterium extorquens AM1.</title>
        <authorList>
            <person name="Pomper B.K."/>
            <person name="Saurel O."/>
            <person name="Milon A."/>
            <person name="Vorholt J.A."/>
        </authorList>
    </citation>
    <scope>FUNCTION</scope>
</reference>
<organism>
    <name type="scientific">Methylorubrum extorquens (strain ATCC 14718 / DSM 1338 / JCM 2805 / NCIMB 9133 / AM1)</name>
    <name type="common">Methylobacterium extorquens</name>
    <dbReference type="NCBI Taxonomy" id="272630"/>
    <lineage>
        <taxon>Bacteria</taxon>
        <taxon>Pseudomonadati</taxon>
        <taxon>Pseudomonadota</taxon>
        <taxon>Alphaproteobacteria</taxon>
        <taxon>Hyphomicrobiales</taxon>
        <taxon>Methylobacteriaceae</taxon>
        <taxon>Methylorubrum</taxon>
    </lineage>
</organism>
<dbReference type="EMBL" id="CP001510">
    <property type="protein sequence ID" value="ACS39599.1"/>
    <property type="molecule type" value="Genomic_DNA"/>
</dbReference>
<dbReference type="RefSeq" id="WP_003597591.1">
    <property type="nucleotide sequence ID" value="NC_012808.1"/>
</dbReference>
<dbReference type="SMR" id="C5B135"/>
<dbReference type="STRING" id="272630.MexAM1_META1p1755"/>
<dbReference type="KEGG" id="mea:Mex_1p1755"/>
<dbReference type="eggNOG" id="COG2218">
    <property type="taxonomic scope" value="Bacteria"/>
</dbReference>
<dbReference type="HOGENOM" id="CLU_072248_1_0_5"/>
<dbReference type="OrthoDB" id="7302713at2"/>
<dbReference type="UniPathway" id="UPA00562">
    <property type="reaction ID" value="UER00704"/>
</dbReference>
<dbReference type="Proteomes" id="UP000009081">
    <property type="component" value="Chromosome"/>
</dbReference>
<dbReference type="GO" id="GO:0005737">
    <property type="term" value="C:cytoplasm"/>
    <property type="evidence" value="ECO:0007669"/>
    <property type="project" value="UniProtKB-SubCell"/>
</dbReference>
<dbReference type="GO" id="GO:0018493">
    <property type="term" value="F:formylmethanofuran dehydrogenase activity"/>
    <property type="evidence" value="ECO:0007669"/>
    <property type="project" value="InterPro"/>
</dbReference>
<dbReference type="GO" id="GO:0046914">
    <property type="term" value="F:transition metal ion binding"/>
    <property type="evidence" value="ECO:0007669"/>
    <property type="project" value="InterPro"/>
</dbReference>
<dbReference type="GO" id="GO:0046294">
    <property type="term" value="P:formaldehyde catabolic process"/>
    <property type="evidence" value="ECO:0007669"/>
    <property type="project" value="UniProtKB-UniPathway"/>
</dbReference>
<dbReference type="GO" id="GO:0015948">
    <property type="term" value="P:methanogenesis"/>
    <property type="evidence" value="ECO:0007669"/>
    <property type="project" value="InterPro"/>
</dbReference>
<dbReference type="GO" id="GO:0006730">
    <property type="term" value="P:one-carbon metabolic process"/>
    <property type="evidence" value="ECO:0000314"/>
    <property type="project" value="UniProtKB"/>
</dbReference>
<dbReference type="Gene3D" id="2.160.20.60">
    <property type="entry name" value="Glutamate synthase, alpha subunit, C-terminal domain"/>
    <property type="match status" value="1"/>
</dbReference>
<dbReference type="InterPro" id="IPR017550">
    <property type="entry name" value="Formylmethanofuran_DH_suC"/>
</dbReference>
<dbReference type="InterPro" id="IPR002489">
    <property type="entry name" value="Glu_synth_asu_C"/>
</dbReference>
<dbReference type="InterPro" id="IPR036485">
    <property type="entry name" value="Glu_synth_asu_C_sf"/>
</dbReference>
<dbReference type="NCBIfam" id="TIGR03122">
    <property type="entry name" value="one_C_dehyd_C"/>
    <property type="match status" value="1"/>
</dbReference>
<dbReference type="PANTHER" id="PTHR39673">
    <property type="entry name" value="TUNGSTEN FORMYLMETHANOFURAN DEHYDROGENASE, SUBUNIT C (FWDC)"/>
    <property type="match status" value="1"/>
</dbReference>
<dbReference type="PANTHER" id="PTHR39673:SF5">
    <property type="entry name" value="TUNGSTEN-CONTAINING FORMYLMETHANOFURAN DEHYDROGENASE 2 SUBUNIT C"/>
    <property type="match status" value="1"/>
</dbReference>
<dbReference type="Pfam" id="PF01493">
    <property type="entry name" value="GXGXG"/>
    <property type="match status" value="1"/>
</dbReference>
<dbReference type="SUPFAM" id="SSF69336">
    <property type="entry name" value="Alpha subunit of glutamate synthase, C-terminal domain"/>
    <property type="match status" value="1"/>
</dbReference>
<feature type="initiator methionine" description="Removed" evidence="2">
    <location>
        <position position="1"/>
    </location>
</feature>
<feature type="chain" id="PRO_0000421573" description="Formyltransferase/hydrolase complex Fhc subunit C">
    <location>
        <begin position="2"/>
        <end position="265"/>
    </location>
</feature>
<gene>
    <name type="primary">fhcC</name>
    <name type="ordered locus">MexAM1_META1p1755</name>
</gene>
<name>FHCC_METEA</name>
<comment type="function">
    <text evidence="2 3">Involved in the transformation of 5-formyl tetrahydromethanopterin (5-formyl-H(4)MPT) to methanofuran (MFR) and formate via the formylmethanofuran (formyl-MFR).</text>
</comment>
<comment type="pathway">
    <text>One-carbon metabolism; formaldehyde degradation; formate from formaldehyde (H(4)MPT route): step 4/5.</text>
</comment>
<comment type="subunit">
    <text evidence="2">Octaheteromer. Part of the formyltransferase/hydrolase complex fhc; composed of FhcA, FhcB, FhcC and FhcD.</text>
</comment>
<comment type="subcellular location">
    <subcellularLocation>
        <location evidence="1">Cytoplasm</location>
    </subcellularLocation>
</comment>
<comment type="miscellaneous">
    <text evidence="5">Although FhcB and FhcC do not possess a formylMFR dehydrogenase (Fmd) activity and have an unknown function, they are required for the stability of the complex.</text>
</comment>
<comment type="similarity">
    <text evidence="4">Belongs to the FwdC/FmdC family.</text>
</comment>
<protein>
    <recommendedName>
        <fullName>Formyltransferase/hydrolase complex Fhc subunit C</fullName>
    </recommendedName>
</protein>
<proteinExistence type="evidence at protein level"/>
<evidence type="ECO:0000250" key="1"/>
<evidence type="ECO:0000269" key="2">
    <source>
    </source>
</evidence>
<evidence type="ECO:0000269" key="3">
    <source>
    </source>
</evidence>
<evidence type="ECO:0000305" key="4"/>
<evidence type="ECO:0000305" key="5">
    <source>
    </source>
</evidence>